<keyword id="KW-0106">Calcium</keyword>
<keyword id="KW-0130">Cell adhesion</keyword>
<keyword id="KW-1003">Cell membrane</keyword>
<keyword id="KW-1015">Disulfide bond</keyword>
<keyword id="KW-0245">EGF-like domain</keyword>
<keyword id="KW-0325">Glycoprotein</keyword>
<keyword id="KW-0401">Integrin</keyword>
<keyword id="KW-0460">Magnesium</keyword>
<keyword id="KW-0472">Membrane</keyword>
<keyword id="KW-0479">Metal-binding</keyword>
<keyword id="KW-0675">Receptor</keyword>
<keyword id="KW-1185">Reference proteome</keyword>
<keyword id="KW-0677">Repeat</keyword>
<keyword id="KW-0732">Signal</keyword>
<keyword id="KW-0812">Transmembrane</keyword>
<keyword id="KW-1133">Transmembrane helix</keyword>
<protein>
    <recommendedName>
        <fullName evidence="7">Integrin beta-8</fullName>
    </recommendedName>
</protein>
<reference key="1">
    <citation type="journal article" date="1991" name="J. Biol. Chem.">
        <title>Cloning and expression of a divergent integrin subunit beta 8.</title>
        <authorList>
            <person name="Moyle M."/>
            <person name="Napier M.A."/>
            <person name="McLean J.W."/>
        </authorList>
    </citation>
    <scope>NUCLEOTIDE SEQUENCE [MRNA]</scope>
    <scope>TISSUE SPECIFICITY</scope>
    <source>
        <strain>New Zealand white</strain>
        <tissue>Placenta</tissue>
    </source>
</reference>
<proteinExistence type="evidence at transcript level"/>
<gene>
    <name type="primary">ITGB8</name>
</gene>
<feature type="signal peptide" evidence="4">
    <location>
        <begin position="1"/>
        <end position="42"/>
    </location>
</feature>
<feature type="chain" id="PRO_0000016355" description="Integrin beta-8">
    <location>
        <begin position="43"/>
        <end position="768"/>
    </location>
</feature>
<feature type="topological domain" description="Extracellular" evidence="4">
    <location>
        <begin position="43"/>
        <end position="683"/>
    </location>
</feature>
<feature type="transmembrane region" description="Helical" evidence="4">
    <location>
        <begin position="684"/>
        <end position="703"/>
    </location>
</feature>
<feature type="topological domain" description="Cytoplasmic" evidence="4">
    <location>
        <begin position="704"/>
        <end position="768"/>
    </location>
</feature>
<feature type="domain" description="PSI" evidence="4">
    <location>
        <begin position="46"/>
        <end position="95"/>
    </location>
</feature>
<feature type="domain" description="VWFA" evidence="2">
    <location>
        <begin position="146"/>
        <end position="384"/>
    </location>
</feature>
<feature type="domain" description="I-EGF 1" evidence="7">
    <location>
        <begin position="471"/>
        <end position="495"/>
    </location>
</feature>
<feature type="domain" description="I-EGF 2" evidence="5">
    <location>
        <begin position="499"/>
        <end position="547"/>
    </location>
</feature>
<feature type="domain" description="I-EGF 3" evidence="5">
    <location>
        <begin position="548"/>
        <end position="584"/>
    </location>
</feature>
<feature type="domain" description="I-EGF 4" evidence="5">
    <location>
        <begin position="585"/>
        <end position="625"/>
    </location>
</feature>
<feature type="binding site" description="in MIDAS binding site" evidence="2">
    <location>
        <position position="154"/>
    </location>
    <ligand>
        <name>Mg(2+)</name>
        <dbReference type="ChEBI" id="CHEBI:18420"/>
    </ligand>
</feature>
<feature type="binding site" description="in MIDAS binding site" evidence="2">
    <location>
        <position position="156"/>
    </location>
    <ligand>
        <name>Mg(2+)</name>
        <dbReference type="ChEBI" id="CHEBI:18420"/>
    </ligand>
</feature>
<feature type="binding site" description="in LIMBS binding site" evidence="2">
    <location>
        <position position="193"/>
    </location>
    <ligand>
        <name>Ca(2+)</name>
        <dbReference type="ChEBI" id="CHEBI:29108"/>
    </ligand>
</feature>
<feature type="binding site" description="in LIMBS binding site" evidence="2">
    <location>
        <position position="249"/>
    </location>
    <ligand>
        <name>Ca(2+)</name>
        <dbReference type="ChEBI" id="CHEBI:29108"/>
    </ligand>
</feature>
<feature type="binding site" description="in LIMBS binding site" evidence="2">
    <location>
        <position position="251"/>
    </location>
    <ligand>
        <name>Ca(2+)</name>
        <dbReference type="ChEBI" id="CHEBI:29108"/>
    </ligand>
</feature>
<feature type="binding site" description="in LIMBS binding site" evidence="2">
    <location>
        <position position="253"/>
    </location>
    <ligand>
        <name>Ca(2+)</name>
        <dbReference type="ChEBI" id="CHEBI:29108"/>
    </ligand>
</feature>
<feature type="binding site" description="in LIMBS binding site" evidence="2">
    <location>
        <position position="254"/>
    </location>
    <ligand>
        <name>Ca(2+)</name>
        <dbReference type="ChEBI" id="CHEBI:29108"/>
    </ligand>
</feature>
<feature type="binding site" description="in MIDAS binding site" evidence="2">
    <location>
        <position position="254"/>
    </location>
    <ligand>
        <name>Mg(2+)</name>
        <dbReference type="ChEBI" id="CHEBI:18420"/>
    </ligand>
</feature>
<feature type="glycosylation site" description="N-linked (GlcNAc...) asparagine" evidence="4">
    <location>
        <position position="233"/>
    </location>
</feature>
<feature type="glycosylation site" description="N-linked (GlcNAc...) asparagine" evidence="4">
    <location>
        <position position="402"/>
    </location>
</feature>
<feature type="glycosylation site" description="N-linked (GlcNAc...) asparagine" evidence="4">
    <location>
        <position position="421"/>
    </location>
</feature>
<feature type="glycosylation site" description="N-linked (GlcNAc...) asparagine" evidence="4">
    <location>
        <position position="431"/>
    </location>
</feature>
<feature type="glycosylation site" description="N-linked (GlcNAc...) asparagine" evidence="4">
    <location>
        <position position="456"/>
    </location>
</feature>
<feature type="glycosylation site" description="N-linked (GlcNAc...) asparagine" evidence="4">
    <location>
        <position position="648"/>
    </location>
</feature>
<feature type="disulfide bond" evidence="1">
    <location>
        <begin position="47"/>
        <end position="65"/>
    </location>
</feature>
<feature type="disulfide bond" evidence="1">
    <location>
        <begin position="55"/>
        <end position="469"/>
    </location>
</feature>
<feature type="disulfide bond" evidence="1">
    <location>
        <begin position="58"/>
        <end position="83"/>
    </location>
</feature>
<feature type="disulfide bond" evidence="1">
    <location>
        <begin position="68"/>
        <end position="94"/>
    </location>
</feature>
<feature type="disulfide bond" evidence="2">
    <location>
        <begin position="211"/>
        <end position="218"/>
    </location>
</feature>
<feature type="disulfide bond" evidence="2">
    <location>
        <begin position="266"/>
        <end position="307"/>
    </location>
</feature>
<feature type="disulfide bond" evidence="2">
    <location>
        <begin position="407"/>
        <end position="419"/>
    </location>
</feature>
<feature type="disulfide bond" evidence="2">
    <location>
        <begin position="439"/>
        <end position="467"/>
    </location>
</feature>
<feature type="disulfide bond" evidence="1">
    <location>
        <begin position="471"/>
        <end position="494"/>
    </location>
</feature>
<feature type="disulfide bond" evidence="7">
    <location>
        <begin position="471"/>
        <end position="491"/>
    </location>
</feature>
<feature type="disulfide bond" evidence="7">
    <location>
        <begin position="481"/>
        <end position="494"/>
    </location>
</feature>
<feature type="disulfide bond" evidence="5">
    <location>
        <begin position="499"/>
        <end position="528"/>
    </location>
</feature>
<feature type="disulfide bond" evidence="5">
    <location>
        <begin position="511"/>
        <end position="526"/>
    </location>
</feature>
<feature type="disulfide bond" evidence="5">
    <location>
        <begin position="520"/>
        <end position="531"/>
    </location>
</feature>
<feature type="disulfide bond" evidence="5">
    <location>
        <begin position="533"/>
        <end position="546"/>
    </location>
</feature>
<feature type="disulfide bond" evidence="5">
    <location>
        <begin position="553"/>
        <end position="567"/>
    </location>
</feature>
<feature type="disulfide bond" evidence="5">
    <location>
        <begin position="561"/>
        <end position="572"/>
    </location>
</feature>
<feature type="disulfide bond" evidence="5">
    <location>
        <begin position="574"/>
        <end position="583"/>
    </location>
</feature>
<feature type="disulfide bond" evidence="5">
    <location>
        <begin position="585"/>
        <end position="609"/>
    </location>
</feature>
<feature type="disulfide bond" evidence="5">
    <location>
        <begin position="593"/>
        <end position="607"/>
    </location>
</feature>
<feature type="disulfide bond" evidence="5">
    <location>
        <begin position="601"/>
        <end position="612"/>
    </location>
</feature>
<feature type="disulfide bond" evidence="5">
    <location>
        <begin position="614"/>
        <end position="624"/>
    </location>
</feature>
<feature type="disulfide bond" evidence="1">
    <location>
        <begin position="627"/>
        <end position="630"/>
    </location>
</feature>
<feature type="disulfide bond" evidence="1">
    <location>
        <begin position="634"/>
        <end position="661"/>
    </location>
</feature>
<feature type="disulfide bond" evidence="1">
    <location>
        <begin position="640"/>
        <end position="657"/>
    </location>
</feature>
<comment type="function">
    <text evidence="2 3">Integrin alpha-V:beta-8 (ITGAV:ITGB8) is a receptor for fibronectin (By similarity). It recognizes the sequence R-G-D in its ligands (By similarity). Integrin alpha-V:beta-6 (ITGAV:ITGB6) mediates R-G-D-dependent release of transforming growth factor beta-1 (TGF-beta-1) from regulatory Latency-associated peptide (LAP), thereby playing a key role in TGF-beta-1 activation on the surface of activated regulatory T-cells (Tregs) (By similarity). Required during vasculogenesis (By similarity).</text>
</comment>
<comment type="subunit">
    <text evidence="2">Heterodimer of an alpha and a beta subunit. Beta-8 (ITGB8) associates with alpha-V (ITGAV) to form ITGAV:ITGB8. ITGAV:ITGB8 interacts with TGFB1.</text>
</comment>
<comment type="subcellular location">
    <subcellularLocation>
        <location evidence="2">Cell membrane</location>
        <topology evidence="4">Single-pass type I membrane protein</topology>
    </subcellularLocation>
</comment>
<comment type="tissue specificity">
    <text evidence="6">Placenta, kidney, brain, ovary, uterus and in several transformed cells.</text>
</comment>
<comment type="domain">
    <text evidence="2">The VWFA domain (or beta I domain) contains two cation-binding sites: the ligand-associated metal ion-binding site (LIMBS or SyMBS) and the metal ion-dependent adhesion site (MIDAS). Unlike in the other beta integrins, the cation-binding site adjacent MIDAS site (ADMIDAS) in ITGB8 is not functional due to the presence of two Asn residues instead of 2 Asp residues. This domain is also part of the ligand-binding site.</text>
</comment>
<comment type="similarity">
    <text evidence="7">Belongs to the integrin beta chain family.</text>
</comment>
<accession>P26013</accession>
<sequence length="768" mass="84406">MCGSALGLPPAAFVRLRSCRPGPAAFLRAAWVLSLVLGLGRSENSRCASSHAVSCSECLALGPDCGWCVHEDFISGGPRSERCDIVSNLISKGCPVDSIEYPSVHVTIPSENEVNTQVTPGEVSIQLRPGAAANFMLKIHPLKKYPVDLYYLVDVSASMHNNIEKLNSVGNDLSRKMAFFSRDFRLGFGSYVDKTVSPYISIHPERIHNQCSDYNLDCMPPHGYIHVLSLTENITEFERAVHRQKISGNIDTPEGGFDAMLQAAVCESHIGWRKEAKRLLLVMTDQTSHLALDSKLAGIVVPNDGNCHLRNNVYVKSTTMEHPSLGQLSEKLIDNNINVIFAVQGKQFHWYKDLLPLLPGTIAGEIESKAANLNNLVVEAYQKLISEVKVQVESKVPGVYFNVTAICPDGARKLGMEGCSNVTSSDEVLFNVTVTMEKCSVTGGKNYAIIKPIGFNETSKIHIHQNCGCECEASRGGAAKCAEEAPLDSTCPQCQESQCHQEEAQSPSQGCKAHEDQPVCSGRGVCVCGKCLCHKMKLGKVYGKYCEKDDFSCPYHHGSLCAGHGECEAGRCQCFSGWEGDRCQCPSAAAQHCVNSKGQVCSGRGTCVCGRCECSDPRSIGRFCEHCPTCPTACSENWNCVQCLHPHNLSQAILDQCRTSCASMEQPYVEQASECFSSPSYLRIFFIIFIVTFLIGLLKILIIRQVILQWNSSKIKSSSDYRVSASKKDKLILQSVCTRAVTYRREKPEEIKLDISKLNAHETFRCNF</sequence>
<dbReference type="EMBL" id="M73781">
    <property type="protein sequence ID" value="AAA31280.1"/>
    <property type="molecule type" value="mRNA"/>
</dbReference>
<dbReference type="PIR" id="B41029">
    <property type="entry name" value="B41029"/>
</dbReference>
<dbReference type="RefSeq" id="NP_001075773.1">
    <property type="nucleotide sequence ID" value="NM_001082304.1"/>
</dbReference>
<dbReference type="SMR" id="P26013"/>
<dbReference type="FunCoup" id="P26013">
    <property type="interactions" value="49"/>
</dbReference>
<dbReference type="STRING" id="9986.ENSOCUP00000043357"/>
<dbReference type="GlyCosmos" id="P26013">
    <property type="glycosylation" value="6 sites, No reported glycans"/>
</dbReference>
<dbReference type="PaxDb" id="9986-ENSOCUP00000001898"/>
<dbReference type="Ensembl" id="ENSOCUT00000047062.1">
    <property type="protein sequence ID" value="ENSOCUP00000035707.1"/>
    <property type="gene ID" value="ENSOCUG00000002197.4"/>
</dbReference>
<dbReference type="GeneID" id="100009141"/>
<dbReference type="KEGG" id="ocu:100009141"/>
<dbReference type="CTD" id="3696"/>
<dbReference type="eggNOG" id="KOG1226">
    <property type="taxonomic scope" value="Eukaryota"/>
</dbReference>
<dbReference type="GeneTree" id="ENSGT01110000267169"/>
<dbReference type="HOGENOM" id="CLU_011772_3_1_1"/>
<dbReference type="InParanoid" id="P26013"/>
<dbReference type="OMA" id="NCRRGPA"/>
<dbReference type="OrthoDB" id="410592at2759"/>
<dbReference type="Proteomes" id="UP000001811">
    <property type="component" value="Chromosome 10"/>
</dbReference>
<dbReference type="Bgee" id="ENSOCUG00000002197">
    <property type="expression patterns" value="Expressed in skeletal muscle tissue and 15 other cell types or tissues"/>
</dbReference>
<dbReference type="GO" id="GO:0009986">
    <property type="term" value="C:cell surface"/>
    <property type="evidence" value="ECO:0007669"/>
    <property type="project" value="TreeGrafter"/>
</dbReference>
<dbReference type="GO" id="GO:0005925">
    <property type="term" value="C:focal adhesion"/>
    <property type="evidence" value="ECO:0007669"/>
    <property type="project" value="TreeGrafter"/>
</dbReference>
<dbReference type="GO" id="GO:0034686">
    <property type="term" value="C:integrin alphav-beta8 complex"/>
    <property type="evidence" value="ECO:0000250"/>
    <property type="project" value="UniProtKB"/>
</dbReference>
<dbReference type="GO" id="GO:0005178">
    <property type="term" value="F:integrin binding"/>
    <property type="evidence" value="ECO:0007669"/>
    <property type="project" value="TreeGrafter"/>
</dbReference>
<dbReference type="GO" id="GO:0046872">
    <property type="term" value="F:metal ion binding"/>
    <property type="evidence" value="ECO:0007669"/>
    <property type="project" value="UniProtKB-KW"/>
</dbReference>
<dbReference type="GO" id="GO:0033627">
    <property type="term" value="P:cell adhesion mediated by integrin"/>
    <property type="evidence" value="ECO:0007669"/>
    <property type="project" value="TreeGrafter"/>
</dbReference>
<dbReference type="GO" id="GO:0016477">
    <property type="term" value="P:cell migration"/>
    <property type="evidence" value="ECO:0007669"/>
    <property type="project" value="TreeGrafter"/>
</dbReference>
<dbReference type="GO" id="GO:0098609">
    <property type="term" value="P:cell-cell adhesion"/>
    <property type="evidence" value="ECO:0007669"/>
    <property type="project" value="TreeGrafter"/>
</dbReference>
<dbReference type="GO" id="GO:0007229">
    <property type="term" value="P:integrin-mediated signaling pathway"/>
    <property type="evidence" value="ECO:0007669"/>
    <property type="project" value="UniProtKB-KW"/>
</dbReference>
<dbReference type="GO" id="GO:0001570">
    <property type="term" value="P:vasculogenesis"/>
    <property type="evidence" value="ECO:0000250"/>
    <property type="project" value="UniProtKB"/>
</dbReference>
<dbReference type="FunFam" id="2.10.25.10:FF:000076">
    <property type="entry name" value="Integrin beta"/>
    <property type="match status" value="1"/>
</dbReference>
<dbReference type="FunFam" id="2.10.25.10:FF:000370">
    <property type="entry name" value="Integrin beta"/>
    <property type="match status" value="1"/>
</dbReference>
<dbReference type="FunFam" id="2.60.40.1510:FF:000010">
    <property type="entry name" value="Integrin beta"/>
    <property type="match status" value="1"/>
</dbReference>
<dbReference type="FunFam" id="3.30.1680.10:FF:000002">
    <property type="entry name" value="Integrin beta"/>
    <property type="match status" value="1"/>
</dbReference>
<dbReference type="FunFam" id="3.40.50.410:FF:000002">
    <property type="entry name" value="Integrin beta"/>
    <property type="match status" value="1"/>
</dbReference>
<dbReference type="Gene3D" id="2.10.25.10">
    <property type="entry name" value="Laminin"/>
    <property type="match status" value="3"/>
</dbReference>
<dbReference type="Gene3D" id="3.30.1680.10">
    <property type="entry name" value="ligand-binding face of the semaphorins, domain 2"/>
    <property type="match status" value="1"/>
</dbReference>
<dbReference type="Gene3D" id="2.60.40.1510">
    <property type="entry name" value="ntegrin, alpha v. Chain A, domain 3"/>
    <property type="match status" value="1"/>
</dbReference>
<dbReference type="Gene3D" id="3.40.50.410">
    <property type="entry name" value="von Willebrand factor, type A domain"/>
    <property type="match status" value="1"/>
</dbReference>
<dbReference type="InterPro" id="IPR000742">
    <property type="entry name" value="EGF-like_dom"/>
</dbReference>
<dbReference type="InterPro" id="IPR033760">
    <property type="entry name" value="Integrin_beta_N"/>
</dbReference>
<dbReference type="InterPro" id="IPR015812">
    <property type="entry name" value="Integrin_bsu"/>
</dbReference>
<dbReference type="InterPro" id="IPR002369">
    <property type="entry name" value="Integrin_bsu_VWA"/>
</dbReference>
<dbReference type="InterPro" id="IPR032695">
    <property type="entry name" value="Integrin_dom_sf"/>
</dbReference>
<dbReference type="InterPro" id="IPR016201">
    <property type="entry name" value="PSI"/>
</dbReference>
<dbReference type="InterPro" id="IPR036465">
    <property type="entry name" value="vWFA_dom_sf"/>
</dbReference>
<dbReference type="PANTHER" id="PTHR10082">
    <property type="entry name" value="INTEGRIN BETA SUBUNIT"/>
    <property type="match status" value="1"/>
</dbReference>
<dbReference type="PANTHER" id="PTHR10082:SF9">
    <property type="entry name" value="INTEGRIN BETA-8"/>
    <property type="match status" value="1"/>
</dbReference>
<dbReference type="Pfam" id="PF23105">
    <property type="entry name" value="EGF_integrin"/>
    <property type="match status" value="1"/>
</dbReference>
<dbReference type="Pfam" id="PF23106">
    <property type="entry name" value="EGF_Teneurin"/>
    <property type="match status" value="1"/>
</dbReference>
<dbReference type="Pfam" id="PF00362">
    <property type="entry name" value="Integrin_beta"/>
    <property type="match status" value="1"/>
</dbReference>
<dbReference type="Pfam" id="PF17205">
    <property type="entry name" value="PSI_integrin"/>
    <property type="match status" value="1"/>
</dbReference>
<dbReference type="PIRSF" id="PIRSF002512">
    <property type="entry name" value="Integrin_B"/>
    <property type="match status" value="1"/>
</dbReference>
<dbReference type="PRINTS" id="PR01186">
    <property type="entry name" value="INTEGRINB"/>
</dbReference>
<dbReference type="SMART" id="SM00187">
    <property type="entry name" value="INB"/>
    <property type="match status" value="1"/>
</dbReference>
<dbReference type="SMART" id="SM00423">
    <property type="entry name" value="PSI"/>
    <property type="match status" value="1"/>
</dbReference>
<dbReference type="SUPFAM" id="SSF57196">
    <property type="entry name" value="EGF/Laminin"/>
    <property type="match status" value="2"/>
</dbReference>
<dbReference type="SUPFAM" id="SSF69179">
    <property type="entry name" value="Integrin domains"/>
    <property type="match status" value="1"/>
</dbReference>
<dbReference type="SUPFAM" id="SSF103575">
    <property type="entry name" value="Plexin repeat"/>
    <property type="match status" value="1"/>
</dbReference>
<dbReference type="SUPFAM" id="SSF53300">
    <property type="entry name" value="vWA-like"/>
    <property type="match status" value="1"/>
</dbReference>
<dbReference type="PROSITE" id="PS00022">
    <property type="entry name" value="EGF_1"/>
    <property type="match status" value="1"/>
</dbReference>
<dbReference type="PROSITE" id="PS01186">
    <property type="entry name" value="EGF_2"/>
    <property type="match status" value="1"/>
</dbReference>
<dbReference type="PROSITE" id="PS00243">
    <property type="entry name" value="I_EGF_1"/>
    <property type="match status" value="2"/>
</dbReference>
<dbReference type="PROSITE" id="PS52047">
    <property type="entry name" value="I_EGF_2"/>
    <property type="match status" value="3"/>
</dbReference>
<organism>
    <name type="scientific">Oryctolagus cuniculus</name>
    <name type="common">Rabbit</name>
    <dbReference type="NCBI Taxonomy" id="9986"/>
    <lineage>
        <taxon>Eukaryota</taxon>
        <taxon>Metazoa</taxon>
        <taxon>Chordata</taxon>
        <taxon>Craniata</taxon>
        <taxon>Vertebrata</taxon>
        <taxon>Euteleostomi</taxon>
        <taxon>Mammalia</taxon>
        <taxon>Eutheria</taxon>
        <taxon>Euarchontoglires</taxon>
        <taxon>Glires</taxon>
        <taxon>Lagomorpha</taxon>
        <taxon>Leporidae</taxon>
        <taxon>Oryctolagus</taxon>
    </lineage>
</organism>
<evidence type="ECO:0000250" key="1">
    <source>
        <dbReference type="UniProtKB" id="P05106"/>
    </source>
</evidence>
<evidence type="ECO:0000250" key="2">
    <source>
        <dbReference type="UniProtKB" id="P26012"/>
    </source>
</evidence>
<evidence type="ECO:0000250" key="3">
    <source>
        <dbReference type="UniProtKB" id="Q0VBD0"/>
    </source>
</evidence>
<evidence type="ECO:0000255" key="4"/>
<evidence type="ECO:0000255" key="5">
    <source>
        <dbReference type="PROSITE-ProRule" id="PRU01392"/>
    </source>
</evidence>
<evidence type="ECO:0000269" key="6">
    <source>
    </source>
</evidence>
<evidence type="ECO:0000305" key="7"/>
<name>ITB8_RABIT</name>